<gene>
    <name evidence="1" type="primary">tdk</name>
    <name type="ordered locus">AYWB_605</name>
</gene>
<feature type="chain" id="PRO_0000242787" description="Thymidine kinase">
    <location>
        <begin position="1"/>
        <end position="209"/>
    </location>
</feature>
<feature type="active site" description="Proton acceptor" evidence="1">
    <location>
        <position position="91"/>
    </location>
</feature>
<feature type="binding site" evidence="1">
    <location>
        <begin position="16"/>
        <end position="23"/>
    </location>
    <ligand>
        <name>ATP</name>
        <dbReference type="ChEBI" id="CHEBI:30616"/>
    </ligand>
</feature>
<feature type="binding site" evidence="1">
    <location>
        <begin position="90"/>
        <end position="93"/>
    </location>
    <ligand>
        <name>ATP</name>
        <dbReference type="ChEBI" id="CHEBI:30616"/>
    </ligand>
</feature>
<accession>Q2NIM1</accession>
<proteinExistence type="inferred from homology"/>
<organism>
    <name type="scientific">Aster yellows witches'-broom phytoplasma (strain AYWB)</name>
    <dbReference type="NCBI Taxonomy" id="322098"/>
    <lineage>
        <taxon>Bacteria</taxon>
        <taxon>Bacillati</taxon>
        <taxon>Mycoplasmatota</taxon>
        <taxon>Mollicutes</taxon>
        <taxon>Acholeplasmatales</taxon>
        <taxon>Acholeplasmataceae</taxon>
        <taxon>Candidatus Phytoplasma</taxon>
        <taxon>16SrI (Aster yellows group)</taxon>
    </lineage>
</organism>
<dbReference type="EC" id="2.7.1.21" evidence="1"/>
<dbReference type="EMBL" id="CP000061">
    <property type="protein sequence ID" value="ABC65722.1"/>
    <property type="status" value="ALT_INIT"/>
    <property type="molecule type" value="Genomic_DNA"/>
</dbReference>
<dbReference type="RefSeq" id="WP_041639918.1">
    <property type="nucleotide sequence ID" value="NC_007716.1"/>
</dbReference>
<dbReference type="SMR" id="Q2NIM1"/>
<dbReference type="STRING" id="322098.AYWB_605"/>
<dbReference type="KEGG" id="ayw:AYWB_605"/>
<dbReference type="eggNOG" id="COG1435">
    <property type="taxonomic scope" value="Bacteria"/>
</dbReference>
<dbReference type="HOGENOM" id="CLU_064400_3_0_14"/>
<dbReference type="OrthoDB" id="9781579at2"/>
<dbReference type="Proteomes" id="UP000001934">
    <property type="component" value="Chromosome"/>
</dbReference>
<dbReference type="GO" id="GO:0005829">
    <property type="term" value="C:cytosol"/>
    <property type="evidence" value="ECO:0007669"/>
    <property type="project" value="TreeGrafter"/>
</dbReference>
<dbReference type="GO" id="GO:0005524">
    <property type="term" value="F:ATP binding"/>
    <property type="evidence" value="ECO:0007669"/>
    <property type="project" value="UniProtKB-UniRule"/>
</dbReference>
<dbReference type="GO" id="GO:0004797">
    <property type="term" value="F:thymidine kinase activity"/>
    <property type="evidence" value="ECO:0007669"/>
    <property type="project" value="UniProtKB-UniRule"/>
</dbReference>
<dbReference type="GO" id="GO:0071897">
    <property type="term" value="P:DNA biosynthetic process"/>
    <property type="evidence" value="ECO:0007669"/>
    <property type="project" value="UniProtKB-KW"/>
</dbReference>
<dbReference type="GO" id="GO:0046104">
    <property type="term" value="P:thymidine metabolic process"/>
    <property type="evidence" value="ECO:0007669"/>
    <property type="project" value="TreeGrafter"/>
</dbReference>
<dbReference type="Gene3D" id="3.30.60.20">
    <property type="match status" value="1"/>
</dbReference>
<dbReference type="Gene3D" id="3.40.50.300">
    <property type="entry name" value="P-loop containing nucleotide triphosphate hydrolases"/>
    <property type="match status" value="1"/>
</dbReference>
<dbReference type="HAMAP" id="MF_00124">
    <property type="entry name" value="Thymidine_kinase"/>
    <property type="match status" value="1"/>
</dbReference>
<dbReference type="InterPro" id="IPR027417">
    <property type="entry name" value="P-loop_NTPase"/>
</dbReference>
<dbReference type="InterPro" id="IPR001267">
    <property type="entry name" value="Thymidine_kinase"/>
</dbReference>
<dbReference type="NCBIfam" id="NF003296">
    <property type="entry name" value="PRK04296.1-1"/>
    <property type="match status" value="1"/>
</dbReference>
<dbReference type="PANTHER" id="PTHR11441">
    <property type="entry name" value="THYMIDINE KINASE"/>
    <property type="match status" value="1"/>
</dbReference>
<dbReference type="PANTHER" id="PTHR11441:SF0">
    <property type="entry name" value="THYMIDINE KINASE, CYTOSOLIC"/>
    <property type="match status" value="1"/>
</dbReference>
<dbReference type="Pfam" id="PF00265">
    <property type="entry name" value="TK"/>
    <property type="match status" value="1"/>
</dbReference>
<dbReference type="PIRSF" id="PIRSF035805">
    <property type="entry name" value="TK_cell"/>
    <property type="match status" value="1"/>
</dbReference>
<dbReference type="SUPFAM" id="SSF57716">
    <property type="entry name" value="Glucocorticoid receptor-like (DNA-binding domain)"/>
    <property type="match status" value="1"/>
</dbReference>
<dbReference type="SUPFAM" id="SSF52540">
    <property type="entry name" value="P-loop containing nucleoside triphosphate hydrolases"/>
    <property type="match status" value="1"/>
</dbReference>
<evidence type="ECO:0000255" key="1">
    <source>
        <dbReference type="HAMAP-Rule" id="MF_00124"/>
    </source>
</evidence>
<evidence type="ECO:0000305" key="2"/>
<comment type="catalytic activity">
    <reaction evidence="1">
        <text>thymidine + ATP = dTMP + ADP + H(+)</text>
        <dbReference type="Rhea" id="RHEA:19129"/>
        <dbReference type="ChEBI" id="CHEBI:15378"/>
        <dbReference type="ChEBI" id="CHEBI:17748"/>
        <dbReference type="ChEBI" id="CHEBI:30616"/>
        <dbReference type="ChEBI" id="CHEBI:63528"/>
        <dbReference type="ChEBI" id="CHEBI:456216"/>
        <dbReference type="EC" id="2.7.1.21"/>
    </reaction>
</comment>
<comment type="subunit">
    <text evidence="1">Homotetramer.</text>
</comment>
<comment type="subcellular location">
    <subcellularLocation>
        <location evidence="1">Cytoplasm</location>
    </subcellularLocation>
</comment>
<comment type="similarity">
    <text evidence="1">Belongs to the thymidine kinase family.</text>
</comment>
<comment type="sequence caution" evidence="2">
    <conflict type="erroneous initiation">
        <sequence resource="EMBL-CDS" id="ABC65722"/>
    </conflict>
</comment>
<keyword id="KW-0067">ATP-binding</keyword>
<keyword id="KW-0963">Cytoplasm</keyword>
<keyword id="KW-0237">DNA synthesis</keyword>
<keyword id="KW-0418">Kinase</keyword>
<keyword id="KW-0547">Nucleotide-binding</keyword>
<keyword id="KW-0808">Transferase</keyword>
<sequence length="209" mass="23466">MTQKEQGQGFIEVICGPMFAGKTESLIQRRNKALKLKKKILSFKPRIDDRYSVKEEIVSHNRNNIPAILIDKSKDILTFITPEINVVIIDESQFLDNDIIAIVDYLANCNIEVIISGLELDFCGKPFGPMPYLLAIADTVTKLTSICAISGGKANRTQRLIEGKPAQSNEPVVLVGGKEYHEPRCRKHHCLADIDKTKVNWKNFANQSK</sequence>
<protein>
    <recommendedName>
        <fullName evidence="1">Thymidine kinase</fullName>
        <ecNumber evidence="1">2.7.1.21</ecNumber>
    </recommendedName>
</protein>
<reference key="1">
    <citation type="journal article" date="2006" name="J. Bacteriol.">
        <title>Living with genome instability: the adaptation of phytoplasmas to diverse environments of their insect and plant hosts.</title>
        <authorList>
            <person name="Bai X."/>
            <person name="Zhang J."/>
            <person name="Ewing A."/>
            <person name="Miller S.A."/>
            <person name="Jancso Radek A."/>
            <person name="Shevchenko D.V."/>
            <person name="Tsukerman K."/>
            <person name="Walunas T."/>
            <person name="Lapidus A."/>
            <person name="Campbell J.W."/>
            <person name="Hogenhout S.A."/>
        </authorList>
    </citation>
    <scope>NUCLEOTIDE SEQUENCE [LARGE SCALE GENOMIC DNA]</scope>
    <source>
        <strain>AYWB</strain>
    </source>
</reference>
<name>KITH_AYWBP</name>